<sequence>MRVLYLLFSFLFIFLMPLPGVFGGIGDPVTCLKSGAICHPVFCPRRYKQIGTCGLPGTKCCKKP</sequence>
<dbReference type="EMBL" id="Z71389">
    <property type="protein sequence ID" value="CAA95992.1"/>
    <property type="molecule type" value="mRNA"/>
</dbReference>
<dbReference type="EMBL" id="AF040153">
    <property type="protein sequence ID" value="AAC33549.1"/>
    <property type="molecule type" value="Genomic_DNA"/>
</dbReference>
<dbReference type="EMBL" id="AF071216">
    <property type="protein sequence ID" value="AAC69554.1"/>
    <property type="molecule type" value="Genomic_DNA"/>
</dbReference>
<dbReference type="EMBL" id="AJ000152">
    <property type="protein sequence ID" value="CAB65126.1"/>
    <property type="molecule type" value="Genomic_DNA"/>
</dbReference>
<dbReference type="EMBL" id="BC069285">
    <property type="protein sequence ID" value="AAH69285.1"/>
    <property type="molecule type" value="mRNA"/>
</dbReference>
<dbReference type="EMBL" id="BC093983">
    <property type="protein sequence ID" value="AAH93983.1"/>
    <property type="molecule type" value="mRNA"/>
</dbReference>
<dbReference type="EMBL" id="BC093985">
    <property type="protein sequence ID" value="AAH93985.1"/>
    <property type="molecule type" value="mRNA"/>
</dbReference>
<dbReference type="CCDS" id="CCDS5971.1"/>
<dbReference type="RefSeq" id="NP_001192195.1">
    <property type="nucleotide sequence ID" value="NM_001205266.1"/>
</dbReference>
<dbReference type="RefSeq" id="NP_004933.1">
    <property type="nucleotide sequence ID" value="NM_004942.4"/>
</dbReference>
<dbReference type="PDB" id="1E4Q">
    <property type="method" value="NMR"/>
    <property type="chains" value="A=28-64"/>
</dbReference>
<dbReference type="PDB" id="1FD3">
    <property type="method" value="X-ray"/>
    <property type="resolution" value="1.35 A"/>
    <property type="chains" value="A/B/C/D=24-64"/>
</dbReference>
<dbReference type="PDB" id="1FD4">
    <property type="method" value="X-ray"/>
    <property type="resolution" value="1.70 A"/>
    <property type="chains" value="A/B/C/D/E/F/G/H/I/J/K/L/M/N/O/P=24-64"/>
</dbReference>
<dbReference type="PDB" id="1FQQ">
    <property type="method" value="NMR"/>
    <property type="chains" value="A=24-64"/>
</dbReference>
<dbReference type="PDB" id="6CS9">
    <property type="method" value="X-ray"/>
    <property type="resolution" value="1.85 A"/>
    <property type="chains" value="A/B=24-64"/>
</dbReference>
<dbReference type="PDB" id="8YD6">
    <property type="method" value="NMR"/>
    <property type="chains" value="A=35-64"/>
</dbReference>
<dbReference type="PDBsum" id="1E4Q"/>
<dbReference type="PDBsum" id="1FD3"/>
<dbReference type="PDBsum" id="1FD4"/>
<dbReference type="PDBsum" id="1FQQ"/>
<dbReference type="PDBsum" id="6CS9"/>
<dbReference type="PDBsum" id="8YD6"/>
<dbReference type="SMR" id="O15263"/>
<dbReference type="BioGRID" id="108037">
    <property type="interactions" value="3"/>
</dbReference>
<dbReference type="FunCoup" id="O15263">
    <property type="interactions" value="243"/>
</dbReference>
<dbReference type="IntAct" id="O15263">
    <property type="interactions" value="1"/>
</dbReference>
<dbReference type="STRING" id="9606.ENSP00000303532"/>
<dbReference type="TCDB" id="1.C.85.1.2">
    <property type="family name" value="the pore-forming Beta-defensin (Beta-defensin) family"/>
</dbReference>
<dbReference type="BioMuta" id="DEFB4A"/>
<dbReference type="MassIVE" id="O15263"/>
<dbReference type="PaxDb" id="9606-ENSP00000303532"/>
<dbReference type="PeptideAtlas" id="O15263"/>
<dbReference type="ProteomicsDB" id="48551"/>
<dbReference type="Antibodypedia" id="22053">
    <property type="antibodies" value="221 antibodies from 16 providers"/>
</dbReference>
<dbReference type="Antibodypedia" id="4918">
    <property type="antibodies" value="150 antibodies from 21 providers"/>
</dbReference>
<dbReference type="DNASU" id="1673"/>
<dbReference type="Ensembl" id="ENST00000302247.3">
    <property type="protein sequence ID" value="ENSP00000303532.2"/>
    <property type="gene ID" value="ENSG00000171711.3"/>
</dbReference>
<dbReference type="Ensembl" id="ENST00000318157.3">
    <property type="protein sequence ID" value="ENSP00000424598.1"/>
    <property type="gene ID" value="ENSG00000177257.3"/>
</dbReference>
<dbReference type="Ensembl" id="ENST00000617136.2">
    <property type="protein sequence ID" value="ENSP00000479138.1"/>
    <property type="gene ID" value="ENSG00000275444.2"/>
</dbReference>
<dbReference type="Ensembl" id="ENST00000642856.2">
    <property type="protein sequence ID" value="ENSP00000496499.1"/>
    <property type="gene ID" value="ENSG00000285181.2"/>
</dbReference>
<dbReference type="Ensembl" id="ENST00000644124.2">
    <property type="protein sequence ID" value="ENSP00000493760.1"/>
    <property type="gene ID" value="ENSG00000285433.2"/>
</dbReference>
<dbReference type="GeneID" id="100289462"/>
<dbReference type="GeneID" id="1673"/>
<dbReference type="KEGG" id="hsa:100289462"/>
<dbReference type="KEGG" id="hsa:1673"/>
<dbReference type="MANE-Select" id="ENST00000302247.3">
    <property type="protein sequence ID" value="ENSP00000303532.2"/>
    <property type="RefSeq nucleotide sequence ID" value="NM_004942.4"/>
    <property type="RefSeq protein sequence ID" value="NP_004933.1"/>
</dbReference>
<dbReference type="MANE-Select" id="ENST00000318157.3">
    <property type="protein sequence ID" value="ENSP00000424598.1"/>
    <property type="RefSeq nucleotide sequence ID" value="NM_001205266.2"/>
    <property type="RefSeq protein sequence ID" value="NP_001192195.1"/>
</dbReference>
<dbReference type="UCSC" id="uc003wsd.4">
    <property type="organism name" value="human"/>
</dbReference>
<dbReference type="AGR" id="HGNC:2767"/>
<dbReference type="AGR" id="HGNC:30193"/>
<dbReference type="CTD" id="100289462"/>
<dbReference type="CTD" id="1673"/>
<dbReference type="DisGeNET" id="100289462"/>
<dbReference type="DisGeNET" id="1673"/>
<dbReference type="GeneCards" id="DEFB4A"/>
<dbReference type="GeneCards" id="DEFB4B"/>
<dbReference type="HGNC" id="HGNC:2767">
    <property type="gene designation" value="DEFB4A"/>
</dbReference>
<dbReference type="HGNC" id="HGNC:30193">
    <property type="gene designation" value="DEFB4B"/>
</dbReference>
<dbReference type="HPA" id="ENSG00000171711">
    <property type="expression patterns" value="Tissue enriched (esophagus)"/>
</dbReference>
<dbReference type="HPA" id="ENSG00000177257">
    <property type="expression patterns" value="Group enriched (esophagus, lymphoid tissue)"/>
</dbReference>
<dbReference type="MIM" id="602215">
    <property type="type" value="gene"/>
</dbReference>
<dbReference type="neXtProt" id="NX_O15263"/>
<dbReference type="OpenTargets" id="ENSG00000171711"/>
<dbReference type="OpenTargets" id="ENSG00000177257"/>
<dbReference type="PharmGKB" id="PA27249"/>
<dbReference type="VEuPathDB" id="HostDB:ENSG00000171711"/>
<dbReference type="VEuPathDB" id="HostDB:ENSG00000177257"/>
<dbReference type="eggNOG" id="ENOG502SYUI">
    <property type="taxonomic scope" value="Eukaryota"/>
</dbReference>
<dbReference type="GeneTree" id="ENSGT00940000160995"/>
<dbReference type="HOGENOM" id="CLU_189296_4_1_1"/>
<dbReference type="InParanoid" id="O15263"/>
<dbReference type="OMA" id="PGTKCCR"/>
<dbReference type="OrthoDB" id="9623680at2759"/>
<dbReference type="PAN-GO" id="O15263">
    <property type="GO annotations" value="5 GO annotations based on evolutionary models"/>
</dbReference>
<dbReference type="PhylomeDB" id="O15263"/>
<dbReference type="PathwayCommons" id="O15263"/>
<dbReference type="Reactome" id="R-HSA-1461957">
    <property type="pathway name" value="Beta defensins"/>
</dbReference>
<dbReference type="Reactome" id="R-HSA-1461973">
    <property type="pathway name" value="Defensins"/>
</dbReference>
<dbReference type="SignaLink" id="O15263"/>
<dbReference type="BioGRID-ORCS" id="100289462">
    <property type="hits" value="15 hits in 1036 CRISPR screens"/>
</dbReference>
<dbReference type="BioGRID-ORCS" id="1673">
    <property type="hits" value="62 hits in 1020 CRISPR screens"/>
</dbReference>
<dbReference type="EvolutionaryTrace" id="O15263"/>
<dbReference type="GeneWiki" id="Beta-defensin_2"/>
<dbReference type="Pharos" id="O15263">
    <property type="development level" value="Tbio"/>
</dbReference>
<dbReference type="PRO" id="PR:O15263"/>
<dbReference type="Proteomes" id="UP000005640">
    <property type="component" value="Chromosome 8"/>
</dbReference>
<dbReference type="RNAct" id="O15263">
    <property type="molecule type" value="protein"/>
</dbReference>
<dbReference type="Bgee" id="ENSG00000171711">
    <property type="expression patterns" value="Expressed in mucosa of stomach and 56 other cell types or tissues"/>
</dbReference>
<dbReference type="GO" id="GO:0005576">
    <property type="term" value="C:extracellular region"/>
    <property type="evidence" value="ECO:0000304"/>
    <property type="project" value="Reactome"/>
</dbReference>
<dbReference type="GO" id="GO:0005615">
    <property type="term" value="C:extracellular space"/>
    <property type="evidence" value="ECO:0000314"/>
    <property type="project" value="UniProtKB"/>
</dbReference>
<dbReference type="GO" id="GO:0005796">
    <property type="term" value="C:Golgi lumen"/>
    <property type="evidence" value="ECO:0000304"/>
    <property type="project" value="Reactome"/>
</dbReference>
<dbReference type="GO" id="GO:0031731">
    <property type="term" value="F:CCR6 chemokine receptor binding"/>
    <property type="evidence" value="ECO:0000314"/>
    <property type="project" value="UniProtKB"/>
</dbReference>
<dbReference type="GO" id="GO:0042056">
    <property type="term" value="F:chemoattractant activity"/>
    <property type="evidence" value="ECO:0000318"/>
    <property type="project" value="GO_Central"/>
</dbReference>
<dbReference type="GO" id="GO:0005546">
    <property type="term" value="F:phosphatidylinositol-4,5-bisphosphate binding"/>
    <property type="evidence" value="ECO:0000314"/>
    <property type="project" value="UniProtKB"/>
</dbReference>
<dbReference type="GO" id="GO:0061760">
    <property type="term" value="P:antifungal innate immune response"/>
    <property type="evidence" value="ECO:0000314"/>
    <property type="project" value="UniProtKB"/>
</dbReference>
<dbReference type="GO" id="GO:0061844">
    <property type="term" value="P:antimicrobial humoral immune response mediated by antimicrobial peptide"/>
    <property type="evidence" value="ECO:0000314"/>
    <property type="project" value="UniProtKB"/>
</dbReference>
<dbReference type="GO" id="GO:0060326">
    <property type="term" value="P:cell chemotaxis"/>
    <property type="evidence" value="ECO:0000318"/>
    <property type="project" value="GO_Central"/>
</dbReference>
<dbReference type="GO" id="GO:0006935">
    <property type="term" value="P:chemotaxis"/>
    <property type="evidence" value="ECO:0000314"/>
    <property type="project" value="UniProtKB"/>
</dbReference>
<dbReference type="GO" id="GO:0042742">
    <property type="term" value="P:defense response to bacterium"/>
    <property type="evidence" value="ECO:0000315"/>
    <property type="project" value="MGI"/>
</dbReference>
<dbReference type="GO" id="GO:0050832">
    <property type="term" value="P:defense response to fungus"/>
    <property type="evidence" value="ECO:0000314"/>
    <property type="project" value="UniProtKB"/>
</dbReference>
<dbReference type="GO" id="GO:0050829">
    <property type="term" value="P:defense response to Gram-negative bacterium"/>
    <property type="evidence" value="ECO:0000314"/>
    <property type="project" value="UniProtKB"/>
</dbReference>
<dbReference type="GO" id="GO:0050830">
    <property type="term" value="P:defense response to Gram-positive bacterium"/>
    <property type="evidence" value="ECO:0000314"/>
    <property type="project" value="UniProtKB"/>
</dbReference>
<dbReference type="GO" id="GO:0007186">
    <property type="term" value="P:G protein-coupled receptor signaling pathway"/>
    <property type="evidence" value="ECO:0000304"/>
    <property type="project" value="ProtInc"/>
</dbReference>
<dbReference type="GO" id="GO:0006955">
    <property type="term" value="P:immune response"/>
    <property type="evidence" value="ECO:0000304"/>
    <property type="project" value="ProtInc"/>
</dbReference>
<dbReference type="GO" id="GO:0031640">
    <property type="term" value="P:killing of cells of another organism"/>
    <property type="evidence" value="ECO:0000314"/>
    <property type="project" value="UniProtKB"/>
</dbReference>
<dbReference type="FunFam" id="3.10.360.10:FF:000001">
    <property type="entry name" value="Beta-defensin 1"/>
    <property type="match status" value="1"/>
</dbReference>
<dbReference type="Gene3D" id="3.10.360.10">
    <property type="entry name" value="Antimicrobial Peptide, Beta-defensin 2, Chain A"/>
    <property type="match status" value="1"/>
</dbReference>
<dbReference type="InterPro" id="IPR006080">
    <property type="entry name" value="Beta/alpha-defensin_C"/>
</dbReference>
<dbReference type="InterPro" id="IPR001855">
    <property type="entry name" value="Defensin_beta-like"/>
</dbReference>
<dbReference type="PANTHER" id="PTHR20515">
    <property type="entry name" value="BETA-DEFENSIN"/>
    <property type="match status" value="1"/>
</dbReference>
<dbReference type="PANTHER" id="PTHR20515:SF2">
    <property type="entry name" value="DEFENSIN BETA 4A"/>
    <property type="match status" value="1"/>
</dbReference>
<dbReference type="Pfam" id="PF00711">
    <property type="entry name" value="Defensin_beta"/>
    <property type="match status" value="1"/>
</dbReference>
<dbReference type="SMART" id="SM00048">
    <property type="entry name" value="DEFSN"/>
    <property type="match status" value="1"/>
</dbReference>
<dbReference type="SUPFAM" id="SSF57392">
    <property type="entry name" value="Defensin-like"/>
    <property type="match status" value="1"/>
</dbReference>
<proteinExistence type="evidence at protein level"/>
<evidence type="ECO:0000255" key="1"/>
<evidence type="ECO:0000269" key="2">
    <source>
    </source>
</evidence>
<evidence type="ECO:0000269" key="3">
    <source>
    </source>
</evidence>
<evidence type="ECO:0000269" key="4">
    <source>
    </source>
</evidence>
<evidence type="ECO:0000269" key="5">
    <source>
    </source>
</evidence>
<evidence type="ECO:0000269" key="6">
    <source>
    </source>
</evidence>
<evidence type="ECO:0000269" key="7">
    <source>
    </source>
</evidence>
<evidence type="ECO:0000269" key="8">
    <source>
    </source>
</evidence>
<evidence type="ECO:0000269" key="9">
    <source>
    </source>
</evidence>
<evidence type="ECO:0000269" key="10">
    <source>
    </source>
</evidence>
<evidence type="ECO:0000303" key="11">
    <source>
    </source>
</evidence>
<evidence type="ECO:0000305" key="12"/>
<evidence type="ECO:0000312" key="13">
    <source>
        <dbReference type="HGNC" id="HGNC:2767"/>
    </source>
</evidence>
<evidence type="ECO:0007744" key="14">
    <source>
        <dbReference type="PDB" id="1E4Q"/>
    </source>
</evidence>
<evidence type="ECO:0007744" key="15">
    <source>
        <dbReference type="PDB" id="1FD3"/>
    </source>
</evidence>
<evidence type="ECO:0007744" key="16">
    <source>
        <dbReference type="PDB" id="1FD4"/>
    </source>
</evidence>
<evidence type="ECO:0007744" key="17">
    <source>
        <dbReference type="PDB" id="1FQQ"/>
    </source>
</evidence>
<evidence type="ECO:0007744" key="18">
    <source>
        <dbReference type="PDB" id="6CS9"/>
    </source>
</evidence>
<evidence type="ECO:0007829" key="19">
    <source>
        <dbReference type="PDB" id="1E4Q"/>
    </source>
</evidence>
<evidence type="ECO:0007829" key="20">
    <source>
        <dbReference type="PDB" id="1FD3"/>
    </source>
</evidence>
<evidence type="ECO:0007829" key="21">
    <source>
        <dbReference type="PDB" id="1FD4"/>
    </source>
</evidence>
<protein>
    <recommendedName>
        <fullName evidence="13">Defensin beta 4A</fullName>
    </recommendedName>
    <alternativeName>
        <fullName evidence="11">Beta-defensin 2</fullName>
        <shortName evidence="11">BD-2</shortName>
        <shortName evidence="11">hBD-2</shortName>
    </alternativeName>
    <alternativeName>
        <fullName>Defensin, beta 2</fullName>
    </alternativeName>
    <alternativeName>
        <fullName>Skin-antimicrobial peptide 1</fullName>
        <shortName>SAP1</shortName>
    </alternativeName>
</protein>
<comment type="function">
    <text evidence="2 3 7 8 9">Exhibits antimicrobial activity against Gram-negative bacteria and Gram-positive bacteria, with highest activity against Gram-negative bacteria (PubMed:10837369, PubMed:9202117). Antimicrobial activity against P.aruginosa seems to be salt-sensitive and is reduced with high salt concentrations greater than 25 mM (PubMed:10837369). Also exhibits antimicrobial activity against the yeast C.albicans (PubMed:10837369, PubMed:30050988, PubMed:9202117). Permeabilizes C.albicans cell membranes via targeting plasma membrane lipid phosphatidylinositol 4,5-bisphosphate (PIP2), thereby leading to cell fragmentation and cell death (PubMed:30050988). Acts as a ligand for C-C chemokine receptor CCR6 (PubMed:10521347, PubMed:20068036). Binds to CCR6 and induces chemotactic activity of CCR6-expressing cells, such as immature dendritic cells and memory T cells (PubMed:10521347, PubMed:20068036).</text>
</comment>
<comment type="subunit">
    <text evidence="4 5">Monomer (PubMed:11300761). Homodimer (PubMed:10906336).</text>
</comment>
<comment type="interaction">
    <interactant intactId="EBI-21800352">
        <id>O15263</id>
    </interactant>
    <interactant intactId="EBI-1056377">
        <id>O75844</id>
        <label>ZMPSTE24</label>
    </interactant>
    <organismsDiffer>false</organismsDiffer>
    <experiments>2</experiments>
</comment>
<comment type="subcellular location">
    <subcellularLocation>
        <location evidence="3">Secreted</location>
    </subcellularLocation>
</comment>
<comment type="tissue specificity">
    <text evidence="3 9 10">Expressed in lung epithelial cells (at protein level) (PubMed:10837369). Expressed in foreskin, lung and trachea (PubMed:9202117). Lower expression in kidney, uterus and salivary gland tissue (PubMed:9202117). Expressed in epithelial cells of the respiratory tract, with higher expression in distal parenchyma of the lung, trachea, and tonsils, and lower expression in pharynx and adenoid, and low expression in tongue and larynx (PubMed:10837369, PubMed:9831658).</text>
</comment>
<comment type="induction">
    <text evidence="3 9 10">Up-regulated by TNF, IL1B, Gram-negative and Gram-positive bacteria, C.albicans and bacterial lipopolysaccharides (LPS) (PubMed:10837369, PubMed:9202117). Up-regulated by inflammation in skin keratinocytes in epidermal tissue (PubMed:9831658).</text>
</comment>
<comment type="similarity">
    <text evidence="12">Belongs to the beta-defensin family. LAP/TAP subfamily.</text>
</comment>
<gene>
    <name type="primary">DEFB4A</name>
    <name type="synonym">DEFB102</name>
    <name type="synonym">DEFB2</name>
    <name type="synonym">DEFB4</name>
</gene>
<gene>
    <name type="primary">DEFB4B</name>
</gene>
<reference key="1">
    <citation type="journal article" date="1997" name="Nature">
        <title>A peptide antibiotic from human skin.</title>
        <authorList>
            <person name="Harder J."/>
            <person name="Bartels J.H."/>
            <person name="Christophers E."/>
            <person name="Schroeder J.-M."/>
        </authorList>
    </citation>
    <scope>NUCLEOTIDE SEQUENCE [MRNA]</scope>
    <scope>FUNCTION</scope>
    <scope>TISSUE SPECIFICITY</scope>
    <scope>INDUCTION BY TNF AND MICROORGANISMS</scope>
    <source>
        <tissue>Skin</tissue>
    </source>
</reference>
<reference key="2">
    <citation type="journal article" date="1998" name="Gene">
        <title>Structure and mapping of the human beta-defensin HBD-2 gene and its expression at sites of inflammation.</title>
        <authorList>
            <person name="Liu L."/>
            <person name="Wang L."/>
            <person name="Jia H.P."/>
            <person name="Zhao C."/>
            <person name="Heng H.H.Q."/>
            <person name="Schutte B.C."/>
            <person name="McCray P.B. Jr."/>
            <person name="Ganz T."/>
        </authorList>
    </citation>
    <scope>NUCLEOTIDE SEQUENCE [GENOMIC DNA]</scope>
    <scope>TISSUE SPECIFICITY</scope>
    <scope>INDUCTION BY INFLAMMATION</scope>
    <source>
        <tissue>Placenta</tissue>
    </source>
</reference>
<reference key="3">
    <citation type="journal article" date="2000" name="Infect. Immun.">
        <title>Transcriptional regulation of beta-defensin gene expression in tracheal epithelial cells.</title>
        <authorList>
            <person name="Diamond G."/>
            <person name="Kaiser V."/>
            <person name="Rhodes J."/>
            <person name="Russell J.P."/>
            <person name="Bevins C.L."/>
        </authorList>
    </citation>
    <scope>NUCLEOTIDE SEQUENCE [GENOMIC DNA]</scope>
</reference>
<reference key="4">
    <citation type="journal article" date="2000" name="Am. J. Respir. Cell Mol. Biol.">
        <title>Mucoid Pseudomonas aeruginosa, TNF-alpha, and IL-1beta, but not IL-6, induce human beta-defensin-2 in respiratory epithelia.</title>
        <authorList>
            <person name="Harder J."/>
            <person name="Meyer-Hoffert U."/>
            <person name="Teran L.M."/>
            <person name="Schwichtenberg L."/>
            <person name="Bartels J."/>
            <person name="Maune S."/>
            <person name="Schroeder J.-M."/>
        </authorList>
    </citation>
    <scope>NUCLEOTIDE SEQUENCE [GENOMIC DNA]</scope>
    <scope>FUNCTION</scope>
    <scope>SUBCELLULAR LOCATION</scope>
    <scope>TISSUE SPECIFICITY</scope>
    <scope>INDUCTION BY P.AERUGINOSA; LPS; TNF AND IL1B</scope>
</reference>
<reference key="5">
    <citation type="journal article" date="2004" name="Genome Res.">
        <title>The status, quality, and expansion of the NIH full-length cDNA project: the Mammalian Gene Collection (MGC).</title>
        <authorList>
            <consortium name="The MGC Project Team"/>
        </authorList>
    </citation>
    <scope>NUCLEOTIDE SEQUENCE [LARGE SCALE MRNA]</scope>
    <source>
        <tissue>Brain</tissue>
    </source>
</reference>
<reference key="6">
    <citation type="journal article" date="1999" name="Science">
        <title>Beta-defensins: linking innate and adaptive immunity through dendritic and T cell CCR6.</title>
        <authorList>
            <person name="Yang D."/>
            <person name="Chertov O."/>
            <person name="Bykovskaia S.N."/>
            <person name="Chen Q."/>
            <person name="Buffo M.J."/>
            <person name="Shogan J."/>
            <person name="Anderson M."/>
            <person name="Schroeder J.M."/>
            <person name="Wang J.M."/>
            <person name="Howard O.M."/>
            <person name="Oppenheim J.J."/>
        </authorList>
    </citation>
    <scope>FUNCTION</scope>
</reference>
<reference key="7">
    <citation type="journal article" date="2002" name="J. Pept. Res.">
        <title>Chemical synthesis of beta-defensins and LEAP-1/hepcidin.</title>
        <authorList>
            <person name="Kluever E."/>
            <person name="Schulz A."/>
            <person name="Forssmann W.-G."/>
            <person name="Adermann K."/>
        </authorList>
    </citation>
    <scope>SYNTHESIS OF 24-64</scope>
</reference>
<reference key="8">
    <citation type="journal article" date="2010" name="J. Biol. Chem.">
        <title>Specific binding and chemotactic activity of mBD4 and its functional orthologue hBD2 to CCR6-expressing cells.</title>
        <authorList>
            <person name="Roehrl J."/>
            <person name="Yang D."/>
            <person name="Oppenheim J.J."/>
            <person name="Hehlgans T."/>
        </authorList>
    </citation>
    <scope>FUNCTION</scope>
    <scope>BINDING TO CCR6</scope>
</reference>
<reference evidence="15 16" key="9">
    <citation type="journal article" date="2000" name="J. Biol. Chem.">
        <title>The structure of human beta-defensin-2 shows evidence of higher order oligomerization.</title>
        <authorList>
            <person name="Hoover D.M."/>
            <person name="Rajashankar K.R."/>
            <person name="Blumenthal R."/>
            <person name="Puri A."/>
            <person name="Oppenheim J.J."/>
            <person name="Chertov O."/>
            <person name="Lubkowski J."/>
        </authorList>
    </citation>
    <scope>X-RAY CRYSTALLOGRAPHY (1.35 ANGSTROMS) OF 24-64</scope>
    <scope>SUBUNIT</scope>
    <scope>DISULFIDE BONDS</scope>
</reference>
<reference evidence="17" key="10">
    <citation type="journal article" date="2001" name="Biochemistry">
        <title>The NMR structure of human beta-defensin-2 reveals a novel alpha-helical segment.</title>
        <authorList>
            <person name="Sawai M.V."/>
            <person name="Jia H.P."/>
            <person name="Liu L."/>
            <person name="Aseyev V."/>
            <person name="Wiencek J.M."/>
            <person name="McCray P.B."/>
            <person name="Ganz T."/>
            <person name="Kearney W.R."/>
            <person name="Tack B.F."/>
        </authorList>
    </citation>
    <scope>STRUCTURE BY NMR OF 24-64</scope>
    <scope>SUBUNIT</scope>
    <scope>DISULFIDE BONDS</scope>
</reference>
<reference evidence="14" key="11">
    <citation type="journal article" date="2001" name="Protein Sci.">
        <title>Structure determination of human and murine beta-defensins reveals structural conservation in the absence of significant sequence similarity.</title>
        <authorList>
            <person name="Bauer F."/>
            <person name="Schweimer K."/>
            <person name="Kluever E."/>
            <person name="Conejo-Garcia J.-R."/>
            <person name="Forssmann W.-G."/>
            <person name="Roesch P."/>
            <person name="Adermann K."/>
            <person name="Sticht H."/>
        </authorList>
    </citation>
    <scope>STRUCTURE BY NMR OF 28-64</scope>
    <scope>DISULFIDE BONDS</scope>
</reference>
<reference evidence="18" key="12">
    <citation type="journal article" date="2018" name="Sci. Adv.">
        <title>Human beta-defensin 2 kills Candida albicans through phosphatidylinositol 4,5-bisphosphate-mediated membrane permeabilization.</title>
        <authorList>
            <person name="Jaervaa M."/>
            <person name="Phan T.K."/>
            <person name="Lay F.T."/>
            <person name="Caria S."/>
            <person name="Kvansakul M."/>
            <person name="Hulett M.D."/>
        </authorList>
    </citation>
    <scope>X-RAY CRYSTALLOGRAPHY (1.85 ANGSTROMS) OF 24-64 IN COMPLEX WITH PIP2</scope>
    <scope>FUNCTION</scope>
    <scope>DISULFIDE BONDS</scope>
    <scope>MUTAGENESIS OF LYS-33; ARG-45; ARG-46; TYR-47; LYS-48 AND LYS-59</scope>
</reference>
<keyword id="KW-0002">3D-structure</keyword>
<keyword id="KW-0044">Antibiotic</keyword>
<keyword id="KW-0929">Antimicrobial</keyword>
<keyword id="KW-0211">Defensin</keyword>
<keyword id="KW-1015">Disulfide bond</keyword>
<keyword id="KW-1267">Proteomics identification</keyword>
<keyword id="KW-1185">Reference proteome</keyword>
<keyword id="KW-0964">Secreted</keyword>
<keyword id="KW-0732">Signal</keyword>
<accession>O15263</accession>
<accession>Q52LC0</accession>
<feature type="signal peptide" evidence="1">
    <location>
        <begin position="1"/>
        <end position="23"/>
    </location>
</feature>
<feature type="peptide" id="PRO_0000006968" description="Defensin beta 4A">
    <location>
        <begin position="24"/>
        <end position="64"/>
    </location>
</feature>
<feature type="region of interest" description="Phosphatidylinositol 4,5-bisphosphate (PIP2) binding" evidence="8">
    <location>
        <begin position="33"/>
        <end position="48"/>
    </location>
</feature>
<feature type="disulfide bond" evidence="4 5 6 8 14 15 16 17 18">
    <location>
        <begin position="31"/>
        <end position="60"/>
    </location>
</feature>
<feature type="disulfide bond" evidence="4 5 6 8 14 15 16 17 18">
    <location>
        <begin position="38"/>
        <end position="53"/>
    </location>
</feature>
<feature type="disulfide bond" evidence="4 5 6 8 14 15 16 17 18">
    <location>
        <begin position="43"/>
        <end position="61"/>
    </location>
</feature>
<feature type="mutagenesis site" description="Loss of PIP2 binding and loss of liposomal lysis activity. Decrease in fungal cell permeabilization. Impaired antifungal activity." evidence="8">
    <original>K</original>
    <variation>A</variation>
    <location>
        <position position="33"/>
    </location>
</feature>
<feature type="mutagenesis site" description="Loss of PIP2 binding and loss of liposomal lysis activity. Decrease in fungal cell permeabilization. Impaired antifungal activity." evidence="8">
    <original>R</original>
    <variation>A</variation>
    <location>
        <position position="45"/>
    </location>
</feature>
<feature type="mutagenesis site" description="No impact on fungal cell permeabilization. Impaired antifungal activity." evidence="8">
    <original>R</original>
    <variation>A</variation>
    <location>
        <position position="46"/>
    </location>
</feature>
<feature type="mutagenesis site" description="No impact on fungal cell permeabilization. No impact on antifungal activity." evidence="8">
    <original>Y</original>
    <variation>A</variation>
    <location>
        <position position="47"/>
    </location>
</feature>
<feature type="mutagenesis site" description="Loss of PIP2 binding and reduced liposomal lysis activity. Impaired antifungal activity. Decrease in fungal cell permeabilization." evidence="8">
    <original>K</original>
    <variation>A</variation>
    <location>
        <position position="48"/>
    </location>
</feature>
<feature type="mutagenesis site" description="No impact on PIP binding and liposomal lysis activity. Lack of antifungal activity. Lack of fungal cell permeabilization." evidence="8">
    <original>K</original>
    <variation>A</variation>
    <location>
        <position position="59"/>
    </location>
</feature>
<feature type="strand" evidence="21">
    <location>
        <begin position="25"/>
        <end position="27"/>
    </location>
</feature>
<feature type="helix" evidence="20">
    <location>
        <begin position="28"/>
        <end position="33"/>
    </location>
</feature>
<feature type="strand" evidence="20">
    <location>
        <begin position="37"/>
        <end position="41"/>
    </location>
</feature>
<feature type="strand" evidence="20">
    <location>
        <begin position="48"/>
        <end position="52"/>
    </location>
</feature>
<feature type="strand" evidence="19">
    <location>
        <begin position="53"/>
        <end position="55"/>
    </location>
</feature>
<feature type="strand" evidence="20">
    <location>
        <begin position="59"/>
        <end position="62"/>
    </location>
</feature>
<organism>
    <name type="scientific">Homo sapiens</name>
    <name type="common">Human</name>
    <dbReference type="NCBI Taxonomy" id="9606"/>
    <lineage>
        <taxon>Eukaryota</taxon>
        <taxon>Metazoa</taxon>
        <taxon>Chordata</taxon>
        <taxon>Craniata</taxon>
        <taxon>Vertebrata</taxon>
        <taxon>Euteleostomi</taxon>
        <taxon>Mammalia</taxon>
        <taxon>Eutheria</taxon>
        <taxon>Euarchontoglires</taxon>
        <taxon>Primates</taxon>
        <taxon>Haplorrhini</taxon>
        <taxon>Catarrhini</taxon>
        <taxon>Hominidae</taxon>
        <taxon>Homo</taxon>
    </lineage>
</organism>
<name>DFB4A_HUMAN</name>